<feature type="chain" id="PRO_0000140640" description="Chorismate synthase">
    <location>
        <begin position="1"/>
        <end position="366"/>
    </location>
</feature>
<feature type="binding site" evidence="1">
    <location>
        <position position="48"/>
    </location>
    <ligand>
        <name>NADP(+)</name>
        <dbReference type="ChEBI" id="CHEBI:58349"/>
    </ligand>
</feature>
<feature type="binding site" evidence="1">
    <location>
        <begin position="125"/>
        <end position="127"/>
    </location>
    <ligand>
        <name>FMN</name>
        <dbReference type="ChEBI" id="CHEBI:58210"/>
    </ligand>
</feature>
<feature type="binding site" evidence="1">
    <location>
        <begin position="241"/>
        <end position="242"/>
    </location>
    <ligand>
        <name>FMN</name>
        <dbReference type="ChEBI" id="CHEBI:58210"/>
    </ligand>
</feature>
<feature type="binding site" evidence="1">
    <location>
        <position position="285"/>
    </location>
    <ligand>
        <name>FMN</name>
        <dbReference type="ChEBI" id="CHEBI:58210"/>
    </ligand>
</feature>
<feature type="binding site" evidence="1">
    <location>
        <begin position="300"/>
        <end position="304"/>
    </location>
    <ligand>
        <name>FMN</name>
        <dbReference type="ChEBI" id="CHEBI:58210"/>
    </ligand>
</feature>
<feature type="binding site" evidence="1">
    <location>
        <position position="326"/>
    </location>
    <ligand>
        <name>FMN</name>
        <dbReference type="ChEBI" id="CHEBI:58210"/>
    </ligand>
</feature>
<reference key="1">
    <citation type="journal article" date="2004" name="Nature">
        <title>Genome sequence of Silicibacter pomeroyi reveals adaptations to the marine environment.</title>
        <authorList>
            <person name="Moran M.A."/>
            <person name="Buchan A."/>
            <person name="Gonzalez J.M."/>
            <person name="Heidelberg J.F."/>
            <person name="Whitman W.B."/>
            <person name="Kiene R.P."/>
            <person name="Henriksen J.R."/>
            <person name="King G.M."/>
            <person name="Belas R."/>
            <person name="Fuqua C."/>
            <person name="Brinkac L.M."/>
            <person name="Lewis M."/>
            <person name="Johri S."/>
            <person name="Weaver B."/>
            <person name="Pai G."/>
            <person name="Eisen J.A."/>
            <person name="Rahe E."/>
            <person name="Sheldon W.M."/>
            <person name="Ye W."/>
            <person name="Miller T.R."/>
            <person name="Carlton J."/>
            <person name="Rasko D.A."/>
            <person name="Paulsen I.T."/>
            <person name="Ren Q."/>
            <person name="Daugherty S.C."/>
            <person name="DeBoy R.T."/>
            <person name="Dodson R.J."/>
            <person name="Durkin A.S."/>
            <person name="Madupu R."/>
            <person name="Nelson W.C."/>
            <person name="Sullivan S.A."/>
            <person name="Rosovitz M.J."/>
            <person name="Haft D.H."/>
            <person name="Selengut J."/>
            <person name="Ward N."/>
        </authorList>
    </citation>
    <scope>NUCLEOTIDE SEQUENCE [LARGE SCALE GENOMIC DNA]</scope>
    <source>
        <strain>ATCC 700808 / DSM 15171 / DSS-3</strain>
    </source>
</reference>
<reference key="2">
    <citation type="journal article" date="2014" name="Stand. Genomic Sci.">
        <title>An updated genome annotation for the model marine bacterium Ruegeria pomeroyi DSS-3.</title>
        <authorList>
            <person name="Rivers A.R."/>
            <person name="Smith C.B."/>
            <person name="Moran M.A."/>
        </authorList>
    </citation>
    <scope>GENOME REANNOTATION</scope>
    <source>
        <strain>ATCC 700808 / DSM 15171 / DSS-3</strain>
    </source>
</reference>
<comment type="function">
    <text evidence="1">Catalyzes the anti-1,4-elimination of the C-3 phosphate and the C-6 proR hydrogen from 5-enolpyruvylshikimate-3-phosphate (EPSP) to yield chorismate, which is the branch point compound that serves as the starting substrate for the three terminal pathways of aromatic amino acid biosynthesis. This reaction introduces a second double bond into the aromatic ring system.</text>
</comment>
<comment type="catalytic activity">
    <reaction evidence="1">
        <text>5-O-(1-carboxyvinyl)-3-phosphoshikimate = chorismate + phosphate</text>
        <dbReference type="Rhea" id="RHEA:21020"/>
        <dbReference type="ChEBI" id="CHEBI:29748"/>
        <dbReference type="ChEBI" id="CHEBI:43474"/>
        <dbReference type="ChEBI" id="CHEBI:57701"/>
        <dbReference type="EC" id="4.2.3.5"/>
    </reaction>
</comment>
<comment type="cofactor">
    <cofactor evidence="1">
        <name>FMNH2</name>
        <dbReference type="ChEBI" id="CHEBI:57618"/>
    </cofactor>
    <text evidence="1">Reduced FMN (FMNH(2)).</text>
</comment>
<comment type="pathway">
    <text evidence="1">Metabolic intermediate biosynthesis; chorismate biosynthesis; chorismate from D-erythrose 4-phosphate and phosphoenolpyruvate: step 7/7.</text>
</comment>
<comment type="subunit">
    <text evidence="1">Homotetramer.</text>
</comment>
<comment type="similarity">
    <text evidence="1">Belongs to the chorismate synthase family.</text>
</comment>
<evidence type="ECO:0000255" key="1">
    <source>
        <dbReference type="HAMAP-Rule" id="MF_00300"/>
    </source>
</evidence>
<dbReference type="EC" id="4.2.3.5" evidence="1"/>
<dbReference type="EMBL" id="CP000031">
    <property type="protein sequence ID" value="AAV93587.1"/>
    <property type="molecule type" value="Genomic_DNA"/>
</dbReference>
<dbReference type="RefSeq" id="WP_011046029.1">
    <property type="nucleotide sequence ID" value="NC_003911.12"/>
</dbReference>
<dbReference type="SMR" id="Q5LX60"/>
<dbReference type="STRING" id="246200.SPO0267"/>
<dbReference type="PaxDb" id="246200-SPO0267"/>
<dbReference type="KEGG" id="sil:SPO0267"/>
<dbReference type="eggNOG" id="COG0082">
    <property type="taxonomic scope" value="Bacteria"/>
</dbReference>
<dbReference type="HOGENOM" id="CLU_034547_0_0_5"/>
<dbReference type="OrthoDB" id="9771806at2"/>
<dbReference type="UniPathway" id="UPA00053">
    <property type="reaction ID" value="UER00090"/>
</dbReference>
<dbReference type="Proteomes" id="UP000001023">
    <property type="component" value="Chromosome"/>
</dbReference>
<dbReference type="GO" id="GO:0005829">
    <property type="term" value="C:cytosol"/>
    <property type="evidence" value="ECO:0007669"/>
    <property type="project" value="TreeGrafter"/>
</dbReference>
<dbReference type="GO" id="GO:0004107">
    <property type="term" value="F:chorismate synthase activity"/>
    <property type="evidence" value="ECO:0007669"/>
    <property type="project" value="UniProtKB-UniRule"/>
</dbReference>
<dbReference type="GO" id="GO:0010181">
    <property type="term" value="F:FMN binding"/>
    <property type="evidence" value="ECO:0007669"/>
    <property type="project" value="TreeGrafter"/>
</dbReference>
<dbReference type="GO" id="GO:0008652">
    <property type="term" value="P:amino acid biosynthetic process"/>
    <property type="evidence" value="ECO:0007669"/>
    <property type="project" value="UniProtKB-KW"/>
</dbReference>
<dbReference type="GO" id="GO:0009073">
    <property type="term" value="P:aromatic amino acid family biosynthetic process"/>
    <property type="evidence" value="ECO:0007669"/>
    <property type="project" value="UniProtKB-KW"/>
</dbReference>
<dbReference type="GO" id="GO:0009423">
    <property type="term" value="P:chorismate biosynthetic process"/>
    <property type="evidence" value="ECO:0007669"/>
    <property type="project" value="UniProtKB-UniRule"/>
</dbReference>
<dbReference type="CDD" id="cd07304">
    <property type="entry name" value="Chorismate_synthase"/>
    <property type="match status" value="1"/>
</dbReference>
<dbReference type="Gene3D" id="3.60.150.10">
    <property type="entry name" value="Chorismate synthase AroC"/>
    <property type="match status" value="1"/>
</dbReference>
<dbReference type="HAMAP" id="MF_00300">
    <property type="entry name" value="Chorismate_synth"/>
    <property type="match status" value="1"/>
</dbReference>
<dbReference type="InterPro" id="IPR000453">
    <property type="entry name" value="Chorismate_synth"/>
</dbReference>
<dbReference type="InterPro" id="IPR035904">
    <property type="entry name" value="Chorismate_synth_AroC_sf"/>
</dbReference>
<dbReference type="InterPro" id="IPR020541">
    <property type="entry name" value="Chorismate_synthase_CS"/>
</dbReference>
<dbReference type="NCBIfam" id="TIGR00033">
    <property type="entry name" value="aroC"/>
    <property type="match status" value="1"/>
</dbReference>
<dbReference type="NCBIfam" id="NF003793">
    <property type="entry name" value="PRK05382.1"/>
    <property type="match status" value="1"/>
</dbReference>
<dbReference type="PANTHER" id="PTHR21085">
    <property type="entry name" value="CHORISMATE SYNTHASE"/>
    <property type="match status" value="1"/>
</dbReference>
<dbReference type="PANTHER" id="PTHR21085:SF0">
    <property type="entry name" value="CHORISMATE SYNTHASE"/>
    <property type="match status" value="1"/>
</dbReference>
<dbReference type="Pfam" id="PF01264">
    <property type="entry name" value="Chorismate_synt"/>
    <property type="match status" value="1"/>
</dbReference>
<dbReference type="PIRSF" id="PIRSF001456">
    <property type="entry name" value="Chorismate_synth"/>
    <property type="match status" value="1"/>
</dbReference>
<dbReference type="SUPFAM" id="SSF103263">
    <property type="entry name" value="Chorismate synthase, AroC"/>
    <property type="match status" value="1"/>
</dbReference>
<dbReference type="PROSITE" id="PS00787">
    <property type="entry name" value="CHORISMATE_SYNTHASE_1"/>
    <property type="match status" value="1"/>
</dbReference>
<dbReference type="PROSITE" id="PS00789">
    <property type="entry name" value="CHORISMATE_SYNTHASE_3"/>
    <property type="match status" value="1"/>
</dbReference>
<gene>
    <name evidence="1" type="primary">aroC</name>
    <name type="ordered locus">SPO0267</name>
</gene>
<keyword id="KW-0028">Amino-acid biosynthesis</keyword>
<keyword id="KW-0057">Aromatic amino acid biosynthesis</keyword>
<keyword id="KW-0274">FAD</keyword>
<keyword id="KW-0285">Flavoprotein</keyword>
<keyword id="KW-0288">FMN</keyword>
<keyword id="KW-0456">Lyase</keyword>
<keyword id="KW-0521">NADP</keyword>
<keyword id="KW-1185">Reference proteome</keyword>
<protein>
    <recommendedName>
        <fullName evidence="1">Chorismate synthase</fullName>
        <shortName evidence="1">CS</shortName>
        <ecNumber evidence="1">4.2.3.5</ecNumber>
    </recommendedName>
    <alternativeName>
        <fullName evidence="1">5-enolpyruvylshikimate-3-phosphate phospholyase</fullName>
    </alternativeName>
</protein>
<name>AROC_RUEPO</name>
<sequence>MSMNSFGHLFRVTTWGESHGPALGATVDGCPPGVPIEEAMIQHWLDRRKPGQNKYTTQRREADEVKILSGVFEGQTTGTPVQLMIENTDQRSKDYGDIKDKFRPGHADITYFQKYGIRDYRGGGRSSARETAARVAAGGLAREAIRALAPNAQITGYMVQMGPHRIDRARFDWAQIEQNPFWVPDAQAASDWADYLDGLRKSGSSVGAVIEVVARGVPAGLGAPVYGKLDTDLAAAMMSINAVKGVEIGEGMAAAELTGEANADEIFMGQNGPQYSSNHAGGILGGISTGQDIVVRFAVKPTSSILTTRKTITKSGEETEIITKGRHDPCVGIRAVPVGEAMMACVILDHLLLHRGQIGANRGHIG</sequence>
<accession>Q5LX60</accession>
<organism>
    <name type="scientific">Ruegeria pomeroyi (strain ATCC 700808 / DSM 15171 / DSS-3)</name>
    <name type="common">Silicibacter pomeroyi</name>
    <dbReference type="NCBI Taxonomy" id="246200"/>
    <lineage>
        <taxon>Bacteria</taxon>
        <taxon>Pseudomonadati</taxon>
        <taxon>Pseudomonadota</taxon>
        <taxon>Alphaproteobacteria</taxon>
        <taxon>Rhodobacterales</taxon>
        <taxon>Roseobacteraceae</taxon>
        <taxon>Ruegeria</taxon>
    </lineage>
</organism>
<proteinExistence type="inferred from homology"/>